<sequence length="275" mass="30420">MPELPEVEVTRRGIEPFVAGRRVERVDVRTAMLRWPVPAGLAEQLRAREVLAVERRGKYLLFEVDAGWFIVHLGMTGTLRVLPAAGVPVAAKHDHIDWIFDEFVLRFRDPRRFGAVLWHPREAGDVHAHPLLASLGVEPFSPAFTGALLHARTRGRTVSVKQALLAGDMVVGVGNIYASESLFRAGIRPTTAAGKVSLPRYERLADAVRATLADAIERGGSTLRDFVGSNGESGYFQLDCFVYDRAGQPCRVCGTPIRQIVQGQRSTYYCPTCQR</sequence>
<proteinExistence type="inferred from homology"/>
<dbReference type="EC" id="3.2.2.23" evidence="2"/>
<dbReference type="EC" id="4.2.99.18" evidence="2"/>
<dbReference type="EMBL" id="AM747720">
    <property type="protein sequence ID" value="CAR51112.1"/>
    <property type="molecule type" value="Genomic_DNA"/>
</dbReference>
<dbReference type="RefSeq" id="WP_006483152.1">
    <property type="nucleotide sequence ID" value="NC_011000.1"/>
</dbReference>
<dbReference type="SMR" id="B4EAR7"/>
<dbReference type="KEGG" id="bcj:BCAL0805"/>
<dbReference type="eggNOG" id="COG0266">
    <property type="taxonomic scope" value="Bacteria"/>
</dbReference>
<dbReference type="HOGENOM" id="CLU_038423_1_1_4"/>
<dbReference type="BioCyc" id="BCEN216591:G1G1V-899-MONOMER"/>
<dbReference type="Proteomes" id="UP000001035">
    <property type="component" value="Chromosome 1"/>
</dbReference>
<dbReference type="GO" id="GO:0034039">
    <property type="term" value="F:8-oxo-7,8-dihydroguanine DNA N-glycosylase activity"/>
    <property type="evidence" value="ECO:0007669"/>
    <property type="project" value="TreeGrafter"/>
</dbReference>
<dbReference type="GO" id="GO:0140078">
    <property type="term" value="F:class I DNA-(apurinic or apyrimidinic site) endonuclease activity"/>
    <property type="evidence" value="ECO:0007669"/>
    <property type="project" value="UniProtKB-EC"/>
</dbReference>
<dbReference type="GO" id="GO:0003684">
    <property type="term" value="F:damaged DNA binding"/>
    <property type="evidence" value="ECO:0007669"/>
    <property type="project" value="InterPro"/>
</dbReference>
<dbReference type="GO" id="GO:0008270">
    <property type="term" value="F:zinc ion binding"/>
    <property type="evidence" value="ECO:0007669"/>
    <property type="project" value="UniProtKB-UniRule"/>
</dbReference>
<dbReference type="GO" id="GO:0006284">
    <property type="term" value="P:base-excision repair"/>
    <property type="evidence" value="ECO:0007669"/>
    <property type="project" value="InterPro"/>
</dbReference>
<dbReference type="CDD" id="cd08966">
    <property type="entry name" value="EcFpg-like_N"/>
    <property type="match status" value="1"/>
</dbReference>
<dbReference type="FunFam" id="1.10.8.50:FF:000003">
    <property type="entry name" value="Formamidopyrimidine-DNA glycosylase"/>
    <property type="match status" value="1"/>
</dbReference>
<dbReference type="Gene3D" id="1.10.8.50">
    <property type="match status" value="1"/>
</dbReference>
<dbReference type="Gene3D" id="3.20.190.10">
    <property type="entry name" value="MutM-like, N-terminal"/>
    <property type="match status" value="1"/>
</dbReference>
<dbReference type="HAMAP" id="MF_00103">
    <property type="entry name" value="Fapy_DNA_glycosyl"/>
    <property type="match status" value="1"/>
</dbReference>
<dbReference type="InterPro" id="IPR015886">
    <property type="entry name" value="DNA_glyclase/AP_lyase_DNA-bd"/>
</dbReference>
<dbReference type="InterPro" id="IPR015887">
    <property type="entry name" value="DNA_glyclase_Znf_dom_DNA_BS"/>
</dbReference>
<dbReference type="InterPro" id="IPR020629">
    <property type="entry name" value="Formamido-pyr_DNA_Glyclase"/>
</dbReference>
<dbReference type="InterPro" id="IPR012319">
    <property type="entry name" value="FPG_cat"/>
</dbReference>
<dbReference type="InterPro" id="IPR035937">
    <property type="entry name" value="MutM-like_N-ter"/>
</dbReference>
<dbReference type="InterPro" id="IPR010979">
    <property type="entry name" value="Ribosomal_uS13-like_H2TH"/>
</dbReference>
<dbReference type="InterPro" id="IPR000214">
    <property type="entry name" value="Znf_DNA_glyclase/AP_lyase"/>
</dbReference>
<dbReference type="InterPro" id="IPR010663">
    <property type="entry name" value="Znf_FPG/IleRS"/>
</dbReference>
<dbReference type="NCBIfam" id="TIGR00577">
    <property type="entry name" value="fpg"/>
    <property type="match status" value="1"/>
</dbReference>
<dbReference type="NCBIfam" id="NF002211">
    <property type="entry name" value="PRK01103.1"/>
    <property type="match status" value="1"/>
</dbReference>
<dbReference type="PANTHER" id="PTHR22993">
    <property type="entry name" value="FORMAMIDOPYRIMIDINE-DNA GLYCOSYLASE"/>
    <property type="match status" value="1"/>
</dbReference>
<dbReference type="PANTHER" id="PTHR22993:SF9">
    <property type="entry name" value="FORMAMIDOPYRIMIDINE-DNA GLYCOSYLASE"/>
    <property type="match status" value="1"/>
</dbReference>
<dbReference type="Pfam" id="PF01149">
    <property type="entry name" value="Fapy_DNA_glyco"/>
    <property type="match status" value="1"/>
</dbReference>
<dbReference type="Pfam" id="PF06831">
    <property type="entry name" value="H2TH"/>
    <property type="match status" value="1"/>
</dbReference>
<dbReference type="Pfam" id="PF06827">
    <property type="entry name" value="zf-FPG_IleRS"/>
    <property type="match status" value="1"/>
</dbReference>
<dbReference type="SMART" id="SM00898">
    <property type="entry name" value="Fapy_DNA_glyco"/>
    <property type="match status" value="1"/>
</dbReference>
<dbReference type="SMART" id="SM01232">
    <property type="entry name" value="H2TH"/>
    <property type="match status" value="1"/>
</dbReference>
<dbReference type="SUPFAM" id="SSF57716">
    <property type="entry name" value="Glucocorticoid receptor-like (DNA-binding domain)"/>
    <property type="match status" value="1"/>
</dbReference>
<dbReference type="SUPFAM" id="SSF81624">
    <property type="entry name" value="N-terminal domain of MutM-like DNA repair proteins"/>
    <property type="match status" value="1"/>
</dbReference>
<dbReference type="SUPFAM" id="SSF46946">
    <property type="entry name" value="S13-like H2TH domain"/>
    <property type="match status" value="1"/>
</dbReference>
<dbReference type="PROSITE" id="PS51068">
    <property type="entry name" value="FPG_CAT"/>
    <property type="match status" value="1"/>
</dbReference>
<dbReference type="PROSITE" id="PS01242">
    <property type="entry name" value="ZF_FPG_1"/>
    <property type="match status" value="1"/>
</dbReference>
<dbReference type="PROSITE" id="PS51066">
    <property type="entry name" value="ZF_FPG_2"/>
    <property type="match status" value="1"/>
</dbReference>
<accession>B4EAR7</accession>
<feature type="initiator methionine" description="Removed" evidence="1">
    <location>
        <position position="1"/>
    </location>
</feature>
<feature type="chain" id="PRO_1000094034" description="Formamidopyrimidine-DNA glycosylase">
    <location>
        <begin position="2"/>
        <end position="275"/>
    </location>
</feature>
<feature type="zinc finger region" description="FPG-type" evidence="2">
    <location>
        <begin position="241"/>
        <end position="275"/>
    </location>
</feature>
<feature type="active site" description="Schiff-base intermediate with DNA" evidence="2">
    <location>
        <position position="2"/>
    </location>
</feature>
<feature type="active site" description="Proton donor" evidence="2">
    <location>
        <position position="3"/>
    </location>
</feature>
<feature type="active site" description="Proton donor; for beta-elimination activity" evidence="2">
    <location>
        <position position="58"/>
    </location>
</feature>
<feature type="active site" description="Proton donor; for delta-elimination activity" evidence="2">
    <location>
        <position position="265"/>
    </location>
</feature>
<feature type="binding site" evidence="2">
    <location>
        <position position="93"/>
    </location>
    <ligand>
        <name>DNA</name>
        <dbReference type="ChEBI" id="CHEBI:16991"/>
    </ligand>
</feature>
<feature type="binding site" evidence="2">
    <location>
        <position position="111"/>
    </location>
    <ligand>
        <name>DNA</name>
        <dbReference type="ChEBI" id="CHEBI:16991"/>
    </ligand>
</feature>
<feature type="binding site" evidence="2">
    <location>
        <position position="156"/>
    </location>
    <ligand>
        <name>DNA</name>
        <dbReference type="ChEBI" id="CHEBI:16991"/>
    </ligand>
</feature>
<comment type="function">
    <text evidence="2">Involved in base excision repair of DNA damaged by oxidation or by mutagenic agents. Acts as a DNA glycosylase that recognizes and removes damaged bases. Has a preference for oxidized purines, such as 7,8-dihydro-8-oxoguanine (8-oxoG). Has AP (apurinic/apyrimidinic) lyase activity and introduces nicks in the DNA strand. Cleaves the DNA backbone by beta-delta elimination to generate a single-strand break at the site of the removed base with both 3'- and 5'-phosphates.</text>
</comment>
<comment type="catalytic activity">
    <reaction evidence="2">
        <text>Hydrolysis of DNA containing ring-opened 7-methylguanine residues, releasing 2,6-diamino-4-hydroxy-5-(N-methyl)formamidopyrimidine.</text>
        <dbReference type="EC" id="3.2.2.23"/>
    </reaction>
</comment>
<comment type="catalytic activity">
    <reaction evidence="2">
        <text>2'-deoxyribonucleotide-(2'-deoxyribose 5'-phosphate)-2'-deoxyribonucleotide-DNA = a 3'-end 2'-deoxyribonucleotide-(2,3-dehydro-2,3-deoxyribose 5'-phosphate)-DNA + a 5'-end 5'-phospho-2'-deoxyribonucleoside-DNA + H(+)</text>
        <dbReference type="Rhea" id="RHEA:66592"/>
        <dbReference type="Rhea" id="RHEA-COMP:13180"/>
        <dbReference type="Rhea" id="RHEA-COMP:16897"/>
        <dbReference type="Rhea" id="RHEA-COMP:17067"/>
        <dbReference type="ChEBI" id="CHEBI:15378"/>
        <dbReference type="ChEBI" id="CHEBI:136412"/>
        <dbReference type="ChEBI" id="CHEBI:157695"/>
        <dbReference type="ChEBI" id="CHEBI:167181"/>
        <dbReference type="EC" id="4.2.99.18"/>
    </reaction>
</comment>
<comment type="cofactor">
    <cofactor evidence="2">
        <name>Zn(2+)</name>
        <dbReference type="ChEBI" id="CHEBI:29105"/>
    </cofactor>
    <text evidence="2">Binds 1 zinc ion per subunit.</text>
</comment>
<comment type="subunit">
    <text evidence="2">Monomer.</text>
</comment>
<comment type="similarity">
    <text evidence="2">Belongs to the FPG family.</text>
</comment>
<reference key="1">
    <citation type="journal article" date="2009" name="J. Bacteriol.">
        <title>The genome of Burkholderia cenocepacia J2315, an epidemic pathogen of cystic fibrosis patients.</title>
        <authorList>
            <person name="Holden M.T."/>
            <person name="Seth-Smith H.M."/>
            <person name="Crossman L.C."/>
            <person name="Sebaihia M."/>
            <person name="Bentley S.D."/>
            <person name="Cerdeno-Tarraga A.M."/>
            <person name="Thomson N.R."/>
            <person name="Bason N."/>
            <person name="Quail M.A."/>
            <person name="Sharp S."/>
            <person name="Cherevach I."/>
            <person name="Churcher C."/>
            <person name="Goodhead I."/>
            <person name="Hauser H."/>
            <person name="Holroyd N."/>
            <person name="Mungall K."/>
            <person name="Scott P."/>
            <person name="Walker D."/>
            <person name="White B."/>
            <person name="Rose H."/>
            <person name="Iversen P."/>
            <person name="Mil-Homens D."/>
            <person name="Rocha E.P."/>
            <person name="Fialho A.M."/>
            <person name="Baldwin A."/>
            <person name="Dowson C."/>
            <person name="Barrell B.G."/>
            <person name="Govan J.R."/>
            <person name="Vandamme P."/>
            <person name="Hart C.A."/>
            <person name="Mahenthiralingam E."/>
            <person name="Parkhill J."/>
        </authorList>
    </citation>
    <scope>NUCLEOTIDE SEQUENCE [LARGE SCALE GENOMIC DNA]</scope>
    <source>
        <strain>ATCC BAA-245 / DSM 16553 / LMG 16656 / NCTC 13227 / J2315 / CF5610</strain>
    </source>
</reference>
<protein>
    <recommendedName>
        <fullName evidence="2">Formamidopyrimidine-DNA glycosylase</fullName>
        <shortName evidence="2">Fapy-DNA glycosylase</shortName>
        <ecNumber evidence="2">3.2.2.23</ecNumber>
    </recommendedName>
    <alternativeName>
        <fullName evidence="2">DNA-(apurinic or apyrimidinic site) lyase MutM</fullName>
        <shortName evidence="2">AP lyase MutM</shortName>
        <ecNumber evidence="2">4.2.99.18</ecNumber>
    </alternativeName>
</protein>
<name>FPG_BURCJ</name>
<evidence type="ECO:0000250" key="1"/>
<evidence type="ECO:0000255" key="2">
    <source>
        <dbReference type="HAMAP-Rule" id="MF_00103"/>
    </source>
</evidence>
<organism>
    <name type="scientific">Burkholderia cenocepacia (strain ATCC BAA-245 / DSM 16553 / LMG 16656 / NCTC 13227 / J2315 / CF5610)</name>
    <name type="common">Burkholderia cepacia (strain J2315)</name>
    <dbReference type="NCBI Taxonomy" id="216591"/>
    <lineage>
        <taxon>Bacteria</taxon>
        <taxon>Pseudomonadati</taxon>
        <taxon>Pseudomonadota</taxon>
        <taxon>Betaproteobacteria</taxon>
        <taxon>Burkholderiales</taxon>
        <taxon>Burkholderiaceae</taxon>
        <taxon>Burkholderia</taxon>
        <taxon>Burkholderia cepacia complex</taxon>
    </lineage>
</organism>
<gene>
    <name evidence="2" type="primary">mutM</name>
    <name evidence="2" type="synonym">fpg</name>
    <name type="ordered locus">BceJ2315_07970</name>
    <name type="ORF">BCAL0805</name>
</gene>
<keyword id="KW-0227">DNA damage</keyword>
<keyword id="KW-0234">DNA repair</keyword>
<keyword id="KW-0238">DNA-binding</keyword>
<keyword id="KW-0326">Glycosidase</keyword>
<keyword id="KW-0378">Hydrolase</keyword>
<keyword id="KW-0456">Lyase</keyword>
<keyword id="KW-0479">Metal-binding</keyword>
<keyword id="KW-0511">Multifunctional enzyme</keyword>
<keyword id="KW-0862">Zinc</keyword>
<keyword id="KW-0863">Zinc-finger</keyword>